<protein>
    <recommendedName>
        <fullName evidence="1">Enolase</fullName>
        <ecNumber evidence="1">4.2.1.11</ecNumber>
    </recommendedName>
    <alternativeName>
        <fullName evidence="1">2-phospho-D-glycerate hydro-lyase</fullName>
    </alternativeName>
    <alternativeName>
        <fullName evidence="1">2-phosphoglycerate dehydratase</fullName>
    </alternativeName>
</protein>
<dbReference type="EC" id="4.2.1.11" evidence="1"/>
<dbReference type="EMBL" id="AP009178">
    <property type="protein sequence ID" value="BAF70763.1"/>
    <property type="molecule type" value="Genomic_DNA"/>
</dbReference>
<dbReference type="RefSeq" id="WP_012083026.1">
    <property type="nucleotide sequence ID" value="NC_009662.1"/>
</dbReference>
<dbReference type="SMR" id="A6Q5K4"/>
<dbReference type="FunCoup" id="A6Q5K4">
    <property type="interactions" value="410"/>
</dbReference>
<dbReference type="STRING" id="387092.NIS_1657"/>
<dbReference type="KEGG" id="nis:NIS_1657"/>
<dbReference type="eggNOG" id="COG0148">
    <property type="taxonomic scope" value="Bacteria"/>
</dbReference>
<dbReference type="HOGENOM" id="CLU_031223_2_1_7"/>
<dbReference type="InParanoid" id="A6Q5K4"/>
<dbReference type="OrthoDB" id="9804716at2"/>
<dbReference type="UniPathway" id="UPA00109">
    <property type="reaction ID" value="UER00187"/>
</dbReference>
<dbReference type="Proteomes" id="UP000001118">
    <property type="component" value="Chromosome"/>
</dbReference>
<dbReference type="GO" id="GO:0009986">
    <property type="term" value="C:cell surface"/>
    <property type="evidence" value="ECO:0007669"/>
    <property type="project" value="UniProtKB-SubCell"/>
</dbReference>
<dbReference type="GO" id="GO:0005576">
    <property type="term" value="C:extracellular region"/>
    <property type="evidence" value="ECO:0007669"/>
    <property type="project" value="UniProtKB-SubCell"/>
</dbReference>
<dbReference type="GO" id="GO:0000015">
    <property type="term" value="C:phosphopyruvate hydratase complex"/>
    <property type="evidence" value="ECO:0007669"/>
    <property type="project" value="InterPro"/>
</dbReference>
<dbReference type="GO" id="GO:0000287">
    <property type="term" value="F:magnesium ion binding"/>
    <property type="evidence" value="ECO:0007669"/>
    <property type="project" value="UniProtKB-UniRule"/>
</dbReference>
<dbReference type="GO" id="GO:0004634">
    <property type="term" value="F:phosphopyruvate hydratase activity"/>
    <property type="evidence" value="ECO:0007669"/>
    <property type="project" value="UniProtKB-UniRule"/>
</dbReference>
<dbReference type="GO" id="GO:0006096">
    <property type="term" value="P:glycolytic process"/>
    <property type="evidence" value="ECO:0007669"/>
    <property type="project" value="UniProtKB-UniRule"/>
</dbReference>
<dbReference type="CDD" id="cd03313">
    <property type="entry name" value="enolase"/>
    <property type="match status" value="1"/>
</dbReference>
<dbReference type="Gene3D" id="3.20.20.120">
    <property type="entry name" value="Enolase-like C-terminal domain"/>
    <property type="match status" value="1"/>
</dbReference>
<dbReference type="Gene3D" id="3.30.390.10">
    <property type="entry name" value="Enolase-like, N-terminal domain"/>
    <property type="match status" value="1"/>
</dbReference>
<dbReference type="HAMAP" id="MF_00318">
    <property type="entry name" value="Enolase"/>
    <property type="match status" value="1"/>
</dbReference>
<dbReference type="InterPro" id="IPR000941">
    <property type="entry name" value="Enolase"/>
</dbReference>
<dbReference type="InterPro" id="IPR036849">
    <property type="entry name" value="Enolase-like_C_sf"/>
</dbReference>
<dbReference type="InterPro" id="IPR029017">
    <property type="entry name" value="Enolase-like_N"/>
</dbReference>
<dbReference type="InterPro" id="IPR020810">
    <property type="entry name" value="Enolase_C"/>
</dbReference>
<dbReference type="InterPro" id="IPR020809">
    <property type="entry name" value="Enolase_CS"/>
</dbReference>
<dbReference type="InterPro" id="IPR020811">
    <property type="entry name" value="Enolase_N"/>
</dbReference>
<dbReference type="NCBIfam" id="TIGR01060">
    <property type="entry name" value="eno"/>
    <property type="match status" value="1"/>
</dbReference>
<dbReference type="PANTHER" id="PTHR11902">
    <property type="entry name" value="ENOLASE"/>
    <property type="match status" value="1"/>
</dbReference>
<dbReference type="PANTHER" id="PTHR11902:SF1">
    <property type="entry name" value="ENOLASE"/>
    <property type="match status" value="1"/>
</dbReference>
<dbReference type="Pfam" id="PF00113">
    <property type="entry name" value="Enolase_C"/>
    <property type="match status" value="1"/>
</dbReference>
<dbReference type="Pfam" id="PF03952">
    <property type="entry name" value="Enolase_N"/>
    <property type="match status" value="1"/>
</dbReference>
<dbReference type="PIRSF" id="PIRSF001400">
    <property type="entry name" value="Enolase"/>
    <property type="match status" value="1"/>
</dbReference>
<dbReference type="PRINTS" id="PR00148">
    <property type="entry name" value="ENOLASE"/>
</dbReference>
<dbReference type="SFLD" id="SFLDS00001">
    <property type="entry name" value="Enolase"/>
    <property type="match status" value="1"/>
</dbReference>
<dbReference type="SFLD" id="SFLDF00002">
    <property type="entry name" value="enolase"/>
    <property type="match status" value="1"/>
</dbReference>
<dbReference type="SMART" id="SM01192">
    <property type="entry name" value="Enolase_C"/>
    <property type="match status" value="1"/>
</dbReference>
<dbReference type="SMART" id="SM01193">
    <property type="entry name" value="Enolase_N"/>
    <property type="match status" value="1"/>
</dbReference>
<dbReference type="SUPFAM" id="SSF51604">
    <property type="entry name" value="Enolase C-terminal domain-like"/>
    <property type="match status" value="1"/>
</dbReference>
<dbReference type="SUPFAM" id="SSF54826">
    <property type="entry name" value="Enolase N-terminal domain-like"/>
    <property type="match status" value="1"/>
</dbReference>
<dbReference type="PROSITE" id="PS00164">
    <property type="entry name" value="ENOLASE"/>
    <property type="match status" value="1"/>
</dbReference>
<proteinExistence type="inferred from homology"/>
<name>ENO_NITSB</name>
<comment type="function">
    <text evidence="1">Catalyzes the reversible conversion of 2-phosphoglycerate (2-PG) into phosphoenolpyruvate (PEP). It is essential for the degradation of carbohydrates via glycolysis.</text>
</comment>
<comment type="catalytic activity">
    <reaction evidence="1">
        <text>(2R)-2-phosphoglycerate = phosphoenolpyruvate + H2O</text>
        <dbReference type="Rhea" id="RHEA:10164"/>
        <dbReference type="ChEBI" id="CHEBI:15377"/>
        <dbReference type="ChEBI" id="CHEBI:58289"/>
        <dbReference type="ChEBI" id="CHEBI:58702"/>
        <dbReference type="EC" id="4.2.1.11"/>
    </reaction>
</comment>
<comment type="cofactor">
    <cofactor evidence="1">
        <name>Mg(2+)</name>
        <dbReference type="ChEBI" id="CHEBI:18420"/>
    </cofactor>
    <text evidence="1">Binds a second Mg(2+) ion via substrate during catalysis.</text>
</comment>
<comment type="pathway">
    <text evidence="1">Carbohydrate degradation; glycolysis; pyruvate from D-glyceraldehyde 3-phosphate: step 4/5.</text>
</comment>
<comment type="subcellular location">
    <subcellularLocation>
        <location evidence="1">Cytoplasm</location>
    </subcellularLocation>
    <subcellularLocation>
        <location evidence="1">Secreted</location>
    </subcellularLocation>
    <subcellularLocation>
        <location evidence="1">Cell surface</location>
    </subcellularLocation>
    <text evidence="1">Fractions of enolase are present in both the cytoplasm and on the cell surface.</text>
</comment>
<comment type="similarity">
    <text evidence="1">Belongs to the enolase family.</text>
</comment>
<accession>A6Q5K4</accession>
<keyword id="KW-0963">Cytoplasm</keyword>
<keyword id="KW-0324">Glycolysis</keyword>
<keyword id="KW-0456">Lyase</keyword>
<keyword id="KW-0460">Magnesium</keyword>
<keyword id="KW-0479">Metal-binding</keyword>
<keyword id="KW-1185">Reference proteome</keyword>
<keyword id="KW-0964">Secreted</keyword>
<gene>
    <name evidence="1" type="primary">eno</name>
    <name type="ordered locus">NIS_1657</name>
</gene>
<reference key="1">
    <citation type="journal article" date="2007" name="Proc. Natl. Acad. Sci. U.S.A.">
        <title>Deep-sea vent epsilon-proteobacterial genomes provide insights into emergence of pathogens.</title>
        <authorList>
            <person name="Nakagawa S."/>
            <person name="Takaki Y."/>
            <person name="Shimamura S."/>
            <person name="Reysenbach A.-L."/>
            <person name="Takai K."/>
            <person name="Horikoshi K."/>
        </authorList>
    </citation>
    <scope>NUCLEOTIDE SEQUENCE [LARGE SCALE GENOMIC DNA]</scope>
    <source>
        <strain>SB155-2</strain>
    </source>
</reference>
<evidence type="ECO:0000255" key="1">
    <source>
        <dbReference type="HAMAP-Rule" id="MF_00318"/>
    </source>
</evidence>
<organism>
    <name type="scientific">Nitratiruptor sp. (strain SB155-2)</name>
    <dbReference type="NCBI Taxonomy" id="387092"/>
    <lineage>
        <taxon>Bacteria</taxon>
        <taxon>Pseudomonadati</taxon>
        <taxon>Campylobacterota</taxon>
        <taxon>Epsilonproteobacteria</taxon>
        <taxon>Nautiliales</taxon>
        <taxon>Nitratiruptoraceae</taxon>
        <taxon>Nitratiruptor</taxon>
    </lineage>
</organism>
<feature type="chain" id="PRO_1000019228" description="Enolase">
    <location>
        <begin position="1"/>
        <end position="421"/>
    </location>
</feature>
<feature type="active site" description="Proton donor" evidence="1">
    <location>
        <position position="204"/>
    </location>
</feature>
<feature type="active site" description="Proton acceptor" evidence="1">
    <location>
        <position position="336"/>
    </location>
</feature>
<feature type="binding site" evidence="1">
    <location>
        <position position="162"/>
    </location>
    <ligand>
        <name>(2R)-2-phosphoglycerate</name>
        <dbReference type="ChEBI" id="CHEBI:58289"/>
    </ligand>
</feature>
<feature type="binding site" evidence="1">
    <location>
        <position position="241"/>
    </location>
    <ligand>
        <name>Mg(2+)</name>
        <dbReference type="ChEBI" id="CHEBI:18420"/>
    </ligand>
</feature>
<feature type="binding site" evidence="1">
    <location>
        <position position="284"/>
    </location>
    <ligand>
        <name>Mg(2+)</name>
        <dbReference type="ChEBI" id="CHEBI:18420"/>
    </ligand>
</feature>
<feature type="binding site" evidence="1">
    <location>
        <position position="311"/>
    </location>
    <ligand>
        <name>Mg(2+)</name>
        <dbReference type="ChEBI" id="CHEBI:18420"/>
    </ligand>
</feature>
<feature type="binding site" evidence="1">
    <location>
        <position position="336"/>
    </location>
    <ligand>
        <name>(2R)-2-phosphoglycerate</name>
        <dbReference type="ChEBI" id="CHEBI:58289"/>
    </ligand>
</feature>
<feature type="binding site" evidence="1">
    <location>
        <position position="365"/>
    </location>
    <ligand>
        <name>(2R)-2-phosphoglycerate</name>
        <dbReference type="ChEBI" id="CHEBI:58289"/>
    </ligand>
</feature>
<feature type="binding site" evidence="1">
    <location>
        <position position="366"/>
    </location>
    <ligand>
        <name>(2R)-2-phosphoglycerate</name>
        <dbReference type="ChEBI" id="CHEBI:58289"/>
    </ligand>
</feature>
<feature type="binding site" evidence="1">
    <location>
        <position position="387"/>
    </location>
    <ligand>
        <name>(2R)-2-phosphoglycerate</name>
        <dbReference type="ChEBI" id="CHEBI:58289"/>
    </ligand>
</feature>
<sequence>MVYIDNIAAQEVLDSRGNPTVKATVILSDGTVASAIVPSGASTGKREALELRDGDDRFGGKGVLKACENVEVAIADELVGLSPYNQAEIDAIMKELDGTNNYSKLGANAVLGVSMAVARAAAKSLHMPLYRYLGGANGVIVPTPMLNIINGGAHADNDVDLQEYMIMPTGFDSFKEALRASAEIYHTLKKLLAEDGHPTALGDEGGFAPNFKNNEEPIEYILKAIEKAGYKPADEVNIALDAASSEFYKDGKYELKGDNKVLSAEELAEFYADLVAKYPIVSLEDGMAEDDWEGWKILTEKLGDKIQLVGDDLFVTNKTILAEGIEKGIANAILIKPNQIGSVSETMQTVRLAQRNGYNCVMSHRSGESEDAFIADFAVALNTAQIKTGAPARGERTAKYNRLLEIERDLLYPEYIGKELF</sequence>